<dbReference type="EMBL" id="BX936398">
    <property type="protein sequence ID" value="CAH20870.1"/>
    <property type="molecule type" value="Genomic_DNA"/>
</dbReference>
<dbReference type="RefSeq" id="WP_002211066.1">
    <property type="nucleotide sequence ID" value="NZ_CP009712.1"/>
</dbReference>
<dbReference type="KEGG" id="ypo:BZ17_871"/>
<dbReference type="KEGG" id="yps:YPTB1631"/>
<dbReference type="PATRIC" id="fig|273123.14.peg.925"/>
<dbReference type="Proteomes" id="UP000001011">
    <property type="component" value="Chromosome"/>
</dbReference>
<dbReference type="GO" id="GO:0005886">
    <property type="term" value="C:plasma membrane"/>
    <property type="evidence" value="ECO:0007669"/>
    <property type="project" value="UniProtKB-SubCell"/>
</dbReference>
<dbReference type="HAMAP" id="MF_01071">
    <property type="entry name" value="UPF0266"/>
    <property type="match status" value="1"/>
</dbReference>
<dbReference type="InterPro" id="IPR009328">
    <property type="entry name" value="DUF986"/>
</dbReference>
<dbReference type="NCBIfam" id="NF002791">
    <property type="entry name" value="PRK02913.1"/>
    <property type="match status" value="1"/>
</dbReference>
<dbReference type="Pfam" id="PF06173">
    <property type="entry name" value="DUF986"/>
    <property type="match status" value="1"/>
</dbReference>
<dbReference type="PIRSF" id="PIRSF020687">
    <property type="entry name" value="UCP020687"/>
    <property type="match status" value="1"/>
</dbReference>
<sequence length="153" mass="17809">MSVTDLVLVVFIALLLIYAIYDEFIMNMMKGKTRLQVHLKRKNKLDCMIFVGLIGILIYNNVMAHGAPLTTYLLVGLALVAVYISYIRWPKLLFKNTGFFYANTFIEYSRIKSMNLSEDGILVIDLEQRRLLIQVKKLDDLEKIYNFFIENQS</sequence>
<evidence type="ECO:0000255" key="1">
    <source>
        <dbReference type="HAMAP-Rule" id="MF_01071"/>
    </source>
</evidence>
<gene>
    <name type="ordered locus">YPTB1631</name>
</gene>
<feature type="chain" id="PRO_1000064600" description="UPF0266 membrane protein YPTB1631">
    <location>
        <begin position="1"/>
        <end position="153"/>
    </location>
</feature>
<feature type="transmembrane region" description="Helical" evidence="1">
    <location>
        <begin position="6"/>
        <end position="26"/>
    </location>
</feature>
<feature type="transmembrane region" description="Helical" evidence="1">
    <location>
        <begin position="45"/>
        <end position="65"/>
    </location>
</feature>
<feature type="transmembrane region" description="Helical" evidence="1">
    <location>
        <begin position="67"/>
        <end position="87"/>
    </location>
</feature>
<organism>
    <name type="scientific">Yersinia pseudotuberculosis serotype I (strain IP32953)</name>
    <dbReference type="NCBI Taxonomy" id="273123"/>
    <lineage>
        <taxon>Bacteria</taxon>
        <taxon>Pseudomonadati</taxon>
        <taxon>Pseudomonadota</taxon>
        <taxon>Gammaproteobacteria</taxon>
        <taxon>Enterobacterales</taxon>
        <taxon>Yersiniaceae</taxon>
        <taxon>Yersinia</taxon>
    </lineage>
</organism>
<comment type="subcellular location">
    <subcellularLocation>
        <location evidence="1">Cell inner membrane</location>
        <topology evidence="1">Multi-pass membrane protein</topology>
    </subcellularLocation>
</comment>
<comment type="similarity">
    <text evidence="1">Belongs to the UPF0266 family.</text>
</comment>
<protein>
    <recommendedName>
        <fullName evidence="1">UPF0266 membrane protein YPTB1631</fullName>
    </recommendedName>
</protein>
<proteinExistence type="inferred from homology"/>
<name>Y1631_YERPS</name>
<keyword id="KW-0997">Cell inner membrane</keyword>
<keyword id="KW-1003">Cell membrane</keyword>
<keyword id="KW-0472">Membrane</keyword>
<keyword id="KW-0812">Transmembrane</keyword>
<keyword id="KW-1133">Transmembrane helix</keyword>
<accession>Q66BY5</accession>
<reference key="1">
    <citation type="journal article" date="2004" name="Proc. Natl. Acad. Sci. U.S.A.">
        <title>Insights into the evolution of Yersinia pestis through whole-genome comparison with Yersinia pseudotuberculosis.</title>
        <authorList>
            <person name="Chain P.S.G."/>
            <person name="Carniel E."/>
            <person name="Larimer F.W."/>
            <person name="Lamerdin J."/>
            <person name="Stoutland P.O."/>
            <person name="Regala W.M."/>
            <person name="Georgescu A.M."/>
            <person name="Vergez L.M."/>
            <person name="Land M.L."/>
            <person name="Motin V.L."/>
            <person name="Brubaker R.R."/>
            <person name="Fowler J."/>
            <person name="Hinnebusch J."/>
            <person name="Marceau M."/>
            <person name="Medigue C."/>
            <person name="Simonet M."/>
            <person name="Chenal-Francisque V."/>
            <person name="Souza B."/>
            <person name="Dacheux D."/>
            <person name="Elliott J.M."/>
            <person name="Derbise A."/>
            <person name="Hauser L.J."/>
            <person name="Garcia E."/>
        </authorList>
    </citation>
    <scope>NUCLEOTIDE SEQUENCE [LARGE SCALE GENOMIC DNA]</scope>
    <source>
        <strain>IP32953</strain>
    </source>
</reference>